<sequence length="272" mass="29229">MKTVSQLIDMKQKQTKISMVTAYDFPSAKQVEAAGIDMILVGDSLGMTVLGYESTVQVTLADMIHHGRAVRRGAPNTFVVVDMPIGAVGISMTQDLNHALKLYQETSANAIKAEGAHITPFIEKATAIGIPVVAHLGLTPQSVGVMGYKLQGATKEAAEQLILDAKNVEQAGAVALVLEAIPNDLAEEISKHLTIPVIGIGAGKGTDGQVLVYHDMLNYGVEHKAKFVKQFADFSVGVDGLKQYDQEVKSGAFPSEEYTYKKKIMNEVNNND</sequence>
<proteinExistence type="inferred from homology"/>
<name>PANB_STAAB</name>
<comment type="function">
    <text evidence="1">Catalyzes the reversible reaction in which hydroxymethyl group from 5,10-methylenetetrahydrofolate is transferred onto alpha-ketoisovalerate to form ketopantoate.</text>
</comment>
<comment type="catalytic activity">
    <reaction evidence="1">
        <text>3-methyl-2-oxobutanoate + (6R)-5,10-methylene-5,6,7,8-tetrahydrofolate + H2O = 2-dehydropantoate + (6S)-5,6,7,8-tetrahydrofolate</text>
        <dbReference type="Rhea" id="RHEA:11824"/>
        <dbReference type="ChEBI" id="CHEBI:11561"/>
        <dbReference type="ChEBI" id="CHEBI:11851"/>
        <dbReference type="ChEBI" id="CHEBI:15377"/>
        <dbReference type="ChEBI" id="CHEBI:15636"/>
        <dbReference type="ChEBI" id="CHEBI:57453"/>
        <dbReference type="EC" id="2.1.2.11"/>
    </reaction>
</comment>
<comment type="cofactor">
    <cofactor evidence="1">
        <name>Mg(2+)</name>
        <dbReference type="ChEBI" id="CHEBI:18420"/>
    </cofactor>
    <text evidence="1">Binds 1 Mg(2+) ion per subunit.</text>
</comment>
<comment type="pathway">
    <text evidence="1">Cofactor biosynthesis; (R)-pantothenate biosynthesis; (R)-pantoate from 3-methyl-2-oxobutanoate: step 1/2.</text>
</comment>
<comment type="subunit">
    <text evidence="1">Homodecamer; pentamer of dimers.</text>
</comment>
<comment type="subcellular location">
    <subcellularLocation>
        <location evidence="1">Cytoplasm</location>
    </subcellularLocation>
</comment>
<comment type="similarity">
    <text evidence="1">Belongs to the PanB family.</text>
</comment>
<evidence type="ECO:0000255" key="1">
    <source>
        <dbReference type="HAMAP-Rule" id="MF_00156"/>
    </source>
</evidence>
<organism>
    <name type="scientific">Staphylococcus aureus (strain bovine RF122 / ET3-1)</name>
    <dbReference type="NCBI Taxonomy" id="273036"/>
    <lineage>
        <taxon>Bacteria</taxon>
        <taxon>Bacillati</taxon>
        <taxon>Bacillota</taxon>
        <taxon>Bacilli</taxon>
        <taxon>Bacillales</taxon>
        <taxon>Staphylococcaceae</taxon>
        <taxon>Staphylococcus</taxon>
    </lineage>
</organism>
<dbReference type="EC" id="2.1.2.11" evidence="1"/>
<dbReference type="EMBL" id="AJ938182">
    <property type="protein sequence ID" value="CAI82160.1"/>
    <property type="molecule type" value="Genomic_DNA"/>
</dbReference>
<dbReference type="RefSeq" id="WP_000860048.1">
    <property type="nucleotide sequence ID" value="NC_007622.1"/>
</dbReference>
<dbReference type="SMR" id="Q2YWF9"/>
<dbReference type="KEGG" id="sab:SAB2472c"/>
<dbReference type="HOGENOM" id="CLU_036645_1_0_9"/>
<dbReference type="UniPathway" id="UPA00028">
    <property type="reaction ID" value="UER00003"/>
</dbReference>
<dbReference type="GO" id="GO:0005737">
    <property type="term" value="C:cytoplasm"/>
    <property type="evidence" value="ECO:0007669"/>
    <property type="project" value="UniProtKB-SubCell"/>
</dbReference>
<dbReference type="GO" id="GO:0003864">
    <property type="term" value="F:3-methyl-2-oxobutanoate hydroxymethyltransferase activity"/>
    <property type="evidence" value="ECO:0007669"/>
    <property type="project" value="UniProtKB-UniRule"/>
</dbReference>
<dbReference type="GO" id="GO:0000287">
    <property type="term" value="F:magnesium ion binding"/>
    <property type="evidence" value="ECO:0007669"/>
    <property type="project" value="TreeGrafter"/>
</dbReference>
<dbReference type="GO" id="GO:0015940">
    <property type="term" value="P:pantothenate biosynthetic process"/>
    <property type="evidence" value="ECO:0007669"/>
    <property type="project" value="UniProtKB-UniRule"/>
</dbReference>
<dbReference type="CDD" id="cd06557">
    <property type="entry name" value="KPHMT-like"/>
    <property type="match status" value="1"/>
</dbReference>
<dbReference type="FunFam" id="3.20.20.60:FF:000030">
    <property type="entry name" value="3-methyl-2-oxobutanoate hydroxymethyltransferase"/>
    <property type="match status" value="1"/>
</dbReference>
<dbReference type="Gene3D" id="3.20.20.60">
    <property type="entry name" value="Phosphoenolpyruvate-binding domains"/>
    <property type="match status" value="1"/>
</dbReference>
<dbReference type="HAMAP" id="MF_00156">
    <property type="entry name" value="PanB"/>
    <property type="match status" value="1"/>
</dbReference>
<dbReference type="InterPro" id="IPR003700">
    <property type="entry name" value="Pantoate_hydroxy_MeTrfase"/>
</dbReference>
<dbReference type="InterPro" id="IPR015813">
    <property type="entry name" value="Pyrv/PenolPyrv_kinase-like_dom"/>
</dbReference>
<dbReference type="InterPro" id="IPR040442">
    <property type="entry name" value="Pyrv_kinase-like_dom_sf"/>
</dbReference>
<dbReference type="NCBIfam" id="TIGR00222">
    <property type="entry name" value="panB"/>
    <property type="match status" value="1"/>
</dbReference>
<dbReference type="NCBIfam" id="NF001452">
    <property type="entry name" value="PRK00311.1"/>
    <property type="match status" value="1"/>
</dbReference>
<dbReference type="PANTHER" id="PTHR20881">
    <property type="entry name" value="3-METHYL-2-OXOBUTANOATE HYDROXYMETHYLTRANSFERASE"/>
    <property type="match status" value="1"/>
</dbReference>
<dbReference type="PANTHER" id="PTHR20881:SF0">
    <property type="entry name" value="3-METHYL-2-OXOBUTANOATE HYDROXYMETHYLTRANSFERASE"/>
    <property type="match status" value="1"/>
</dbReference>
<dbReference type="Pfam" id="PF02548">
    <property type="entry name" value="Pantoate_transf"/>
    <property type="match status" value="1"/>
</dbReference>
<dbReference type="PIRSF" id="PIRSF000388">
    <property type="entry name" value="Pantoate_hydroxy_MeTrfase"/>
    <property type="match status" value="1"/>
</dbReference>
<dbReference type="SUPFAM" id="SSF51621">
    <property type="entry name" value="Phosphoenolpyruvate/pyruvate domain"/>
    <property type="match status" value="1"/>
</dbReference>
<keyword id="KW-0963">Cytoplasm</keyword>
<keyword id="KW-0460">Magnesium</keyword>
<keyword id="KW-0479">Metal-binding</keyword>
<keyword id="KW-0566">Pantothenate biosynthesis</keyword>
<keyword id="KW-0808">Transferase</keyword>
<gene>
    <name evidence="1" type="primary">panB</name>
    <name type="ordered locus">SAB2472c</name>
</gene>
<feature type="chain" id="PRO_0000297383" description="3-methyl-2-oxobutanoate hydroxymethyltransferase">
    <location>
        <begin position="1"/>
        <end position="272"/>
    </location>
</feature>
<feature type="active site" description="Proton acceptor" evidence="1">
    <location>
        <position position="179"/>
    </location>
</feature>
<feature type="binding site" evidence="1">
    <location>
        <begin position="43"/>
        <end position="44"/>
    </location>
    <ligand>
        <name>3-methyl-2-oxobutanoate</name>
        <dbReference type="ChEBI" id="CHEBI:11851"/>
    </ligand>
</feature>
<feature type="binding site" evidence="1">
    <location>
        <position position="43"/>
    </location>
    <ligand>
        <name>Mg(2+)</name>
        <dbReference type="ChEBI" id="CHEBI:18420"/>
    </ligand>
</feature>
<feature type="binding site" evidence="1">
    <location>
        <position position="82"/>
    </location>
    <ligand>
        <name>3-methyl-2-oxobutanoate</name>
        <dbReference type="ChEBI" id="CHEBI:11851"/>
    </ligand>
</feature>
<feature type="binding site" evidence="1">
    <location>
        <position position="82"/>
    </location>
    <ligand>
        <name>Mg(2+)</name>
        <dbReference type="ChEBI" id="CHEBI:18420"/>
    </ligand>
</feature>
<feature type="binding site" evidence="1">
    <location>
        <position position="112"/>
    </location>
    <ligand>
        <name>3-methyl-2-oxobutanoate</name>
        <dbReference type="ChEBI" id="CHEBI:11851"/>
    </ligand>
</feature>
<feature type="binding site" evidence="1">
    <location>
        <position position="114"/>
    </location>
    <ligand>
        <name>Mg(2+)</name>
        <dbReference type="ChEBI" id="CHEBI:18420"/>
    </ligand>
</feature>
<accession>Q2YWF9</accession>
<reference key="1">
    <citation type="journal article" date="2007" name="PLoS ONE">
        <title>Molecular correlates of host specialization in Staphylococcus aureus.</title>
        <authorList>
            <person name="Herron-Olson L."/>
            <person name="Fitzgerald J.R."/>
            <person name="Musser J.M."/>
            <person name="Kapur V."/>
        </authorList>
    </citation>
    <scope>NUCLEOTIDE SEQUENCE [LARGE SCALE GENOMIC DNA]</scope>
    <source>
        <strain>bovine RF122 / ET3-1</strain>
    </source>
</reference>
<protein>
    <recommendedName>
        <fullName evidence="1">3-methyl-2-oxobutanoate hydroxymethyltransferase</fullName>
        <ecNumber evidence="1">2.1.2.11</ecNumber>
    </recommendedName>
    <alternativeName>
        <fullName evidence="1">Ketopantoate hydroxymethyltransferase</fullName>
        <shortName evidence="1">KPHMT</shortName>
    </alternativeName>
</protein>